<feature type="chain" id="PRO_1000056378" description="Mycobacterial beta-ketoacyl-[acyl-carrier-protein] synthase III">
    <location>
        <begin position="1"/>
        <end position="335"/>
    </location>
</feature>
<feature type="region of interest" description="ACP-binding" evidence="1">
    <location>
        <begin position="259"/>
        <end position="263"/>
    </location>
</feature>
<feature type="active site" evidence="1">
    <location>
        <position position="122"/>
    </location>
</feature>
<feature type="active site" evidence="1">
    <location>
        <position position="258"/>
    </location>
</feature>
<feature type="active site" evidence="1">
    <location>
        <position position="289"/>
    </location>
</feature>
<sequence length="335" mass="34873">MTEIATTSGARSVGLLSVGAYRPERVVTNDEICQHIDSSDEWIYTRTGIKTRRFAADDESAASMATEACRRALSNAGLSAADIDGVIVTTNTHFLQTPPAAPMVAASLGAKGILGFDLSAGCAGFGYALGAAADMIRGGGAATMLVVGTEKLSPTIDMYDRGNCFIFADGAAAVVVGETPFQGIGPTVAGSDGEQADAIRQDIDWITFAQNPSGPRPFVRLEGPAVFRWAAFKMGDVGRRAMDAAGVRPDQIDVFVPHQANSRINELLVKNLQLRPDAVVANDIEHTGNTSAASIPLAMAELLTTGAAKPGDLALLIGYGAGLSYAAQVVRMPKG</sequence>
<evidence type="ECO:0000255" key="1">
    <source>
        <dbReference type="HAMAP-Rule" id="MF_01815"/>
    </source>
</evidence>
<reference key="1">
    <citation type="journal article" date="2007" name="Proc. Natl. Acad. Sci. U.S.A.">
        <title>Genome plasticity of BCG and impact on vaccine efficacy.</title>
        <authorList>
            <person name="Brosch R."/>
            <person name="Gordon S.V."/>
            <person name="Garnier T."/>
            <person name="Eiglmeier K."/>
            <person name="Frigui W."/>
            <person name="Valenti P."/>
            <person name="Dos Santos S."/>
            <person name="Duthoy S."/>
            <person name="Lacroix C."/>
            <person name="Garcia-Pelayo C."/>
            <person name="Inwald J.K."/>
            <person name="Golby P."/>
            <person name="Garcia J.N."/>
            <person name="Hewinson R.G."/>
            <person name="Behr M.A."/>
            <person name="Quail M.A."/>
            <person name="Churcher C."/>
            <person name="Barrell B.G."/>
            <person name="Parkhill J."/>
            <person name="Cole S.T."/>
        </authorList>
    </citation>
    <scope>NUCLEOTIDE SEQUENCE [LARGE SCALE GENOMIC DNA]</scope>
    <source>
        <strain>BCG / Pasteur 1173P2</strain>
    </source>
</reference>
<name>FABH_MYCBP</name>
<accession>A1KG10</accession>
<proteinExistence type="inferred from homology"/>
<dbReference type="EC" id="2.3.1.301" evidence="1"/>
<dbReference type="EMBL" id="AM408590">
    <property type="protein sequence ID" value="CAL70562.1"/>
    <property type="molecule type" value="Genomic_DNA"/>
</dbReference>
<dbReference type="RefSeq" id="WP_003402861.1">
    <property type="nucleotide sequence ID" value="NC_008769.1"/>
</dbReference>
<dbReference type="SMR" id="A1KG10"/>
<dbReference type="GeneID" id="45424497"/>
<dbReference type="KEGG" id="mbb:BCG_0577c"/>
<dbReference type="HOGENOM" id="CLU_039592_4_0_11"/>
<dbReference type="UniPathway" id="UPA00094"/>
<dbReference type="UniPathway" id="UPA00915"/>
<dbReference type="Proteomes" id="UP000001472">
    <property type="component" value="Chromosome"/>
</dbReference>
<dbReference type="GO" id="GO:0005737">
    <property type="term" value="C:cytoplasm"/>
    <property type="evidence" value="ECO:0007669"/>
    <property type="project" value="UniProtKB-SubCell"/>
</dbReference>
<dbReference type="GO" id="GO:0004315">
    <property type="term" value="F:3-oxoacyl-[acyl-carrier-protein] synthase activity"/>
    <property type="evidence" value="ECO:0007669"/>
    <property type="project" value="InterPro"/>
</dbReference>
<dbReference type="GO" id="GO:0033818">
    <property type="term" value="F:beta-ketoacyl-acyl-carrier-protein synthase III activity"/>
    <property type="evidence" value="ECO:0007669"/>
    <property type="project" value="UniProtKB-UniRule"/>
</dbReference>
<dbReference type="GO" id="GO:0006633">
    <property type="term" value="P:fatty acid biosynthetic process"/>
    <property type="evidence" value="ECO:0007669"/>
    <property type="project" value="UniProtKB-UniRule"/>
</dbReference>
<dbReference type="CDD" id="cd00830">
    <property type="entry name" value="KAS_III"/>
    <property type="match status" value="1"/>
</dbReference>
<dbReference type="FunFam" id="3.40.47.10:FF:000071">
    <property type="entry name" value="3-oxoacyl-[acyl-carrier-protein] synthase 3"/>
    <property type="match status" value="1"/>
</dbReference>
<dbReference type="FunFam" id="3.40.47.10:FF:000076">
    <property type="entry name" value="3-oxoacyl-[acyl-carrier-protein] synthase 3"/>
    <property type="match status" value="1"/>
</dbReference>
<dbReference type="Gene3D" id="3.40.47.10">
    <property type="match status" value="2"/>
</dbReference>
<dbReference type="HAMAP" id="MF_01815">
    <property type="entry name" value="FabH"/>
    <property type="match status" value="1"/>
</dbReference>
<dbReference type="InterPro" id="IPR013747">
    <property type="entry name" value="ACP_syn_III_C"/>
</dbReference>
<dbReference type="InterPro" id="IPR013751">
    <property type="entry name" value="ACP_syn_III_N"/>
</dbReference>
<dbReference type="InterPro" id="IPR004655">
    <property type="entry name" value="FabH"/>
</dbReference>
<dbReference type="InterPro" id="IPR016039">
    <property type="entry name" value="Thiolase-like"/>
</dbReference>
<dbReference type="NCBIfam" id="TIGR00747">
    <property type="entry name" value="fabH"/>
    <property type="match status" value="1"/>
</dbReference>
<dbReference type="NCBIfam" id="NF006829">
    <property type="entry name" value="PRK09352.1"/>
    <property type="match status" value="1"/>
</dbReference>
<dbReference type="PANTHER" id="PTHR43091">
    <property type="entry name" value="3-OXOACYL-[ACYL-CARRIER-PROTEIN] SYNTHASE"/>
    <property type="match status" value="1"/>
</dbReference>
<dbReference type="PANTHER" id="PTHR43091:SF1">
    <property type="entry name" value="BETA-KETOACYL-[ACYL-CARRIER-PROTEIN] SYNTHASE III, CHLOROPLASTIC"/>
    <property type="match status" value="1"/>
</dbReference>
<dbReference type="Pfam" id="PF08545">
    <property type="entry name" value="ACP_syn_III"/>
    <property type="match status" value="1"/>
</dbReference>
<dbReference type="Pfam" id="PF08541">
    <property type="entry name" value="ACP_syn_III_C"/>
    <property type="match status" value="1"/>
</dbReference>
<dbReference type="SUPFAM" id="SSF53901">
    <property type="entry name" value="Thiolase-like"/>
    <property type="match status" value="1"/>
</dbReference>
<protein>
    <recommendedName>
        <fullName evidence="1">Mycobacterial beta-ketoacyl-[acyl-carrier-protein] synthase III</fullName>
        <shortName evidence="1">Beta-ketoacyl-ACP synthase III</shortName>
        <shortName evidence="1">KAS III</shortName>
        <ecNumber evidence="1">2.3.1.301</ecNumber>
    </recommendedName>
    <alternativeName>
        <fullName evidence="1">3-oxoacyl-[acyl-carrier-protein] synthase 3</fullName>
    </alternativeName>
    <alternativeName>
        <fullName evidence="1">3-oxoacyl-[acyl-carrier-protein] synthase III</fullName>
    </alternativeName>
</protein>
<comment type="function">
    <text evidence="1">Catalyzes the condensation reaction of fatty acid synthesis by the addition to an acyl acceptor of two carbons from malonyl-ACP. Catalyzes the first condensation reaction which initiates fatty acid synthesis and may therefore play a role in governing the total rate of fatty acid production. Possesses both acetoacetyl-ACP synthase and acetyl transacylase activities. Its substrate specificity determines the biosynthesis of branched-chain and/or straight-chain of fatty acids.</text>
</comment>
<comment type="catalytic activity">
    <reaction evidence="1">
        <text>malonyl-[ACP] + dodecanoyl-CoA + H(+) = 3-oxotetradecanoyl-[ACP] + CO2 + CoA</text>
        <dbReference type="Rhea" id="RHEA:43640"/>
        <dbReference type="Rhea" id="RHEA-COMP:9623"/>
        <dbReference type="Rhea" id="RHEA-COMP:9645"/>
        <dbReference type="ChEBI" id="CHEBI:15378"/>
        <dbReference type="ChEBI" id="CHEBI:16526"/>
        <dbReference type="ChEBI" id="CHEBI:57287"/>
        <dbReference type="ChEBI" id="CHEBI:57375"/>
        <dbReference type="ChEBI" id="CHEBI:78449"/>
        <dbReference type="ChEBI" id="CHEBI:78473"/>
        <dbReference type="EC" id="2.3.1.301"/>
    </reaction>
    <physiologicalReaction direction="left-to-right" evidence="1">
        <dbReference type="Rhea" id="RHEA:43641"/>
    </physiologicalReaction>
</comment>
<comment type="pathway">
    <text evidence="1">Lipid metabolism; fatty acid biosynthesis.</text>
</comment>
<comment type="pathway">
    <text evidence="1">Lipid metabolism; mycolic acid biosynthesis.</text>
</comment>
<comment type="subunit">
    <text evidence="1">Homodimer.</text>
</comment>
<comment type="subcellular location">
    <subcellularLocation>
        <location evidence="1">Cytoplasm</location>
    </subcellularLocation>
</comment>
<comment type="domain">
    <text evidence="1">The last Arg residue of the ACP-binding site is essential for the weak association between ACP/AcpP and FabH.</text>
</comment>
<comment type="similarity">
    <text evidence="1">Belongs to the thiolase-like superfamily. FabH family.</text>
</comment>
<keyword id="KW-0012">Acyltransferase</keyword>
<keyword id="KW-0963">Cytoplasm</keyword>
<keyword id="KW-0275">Fatty acid biosynthesis</keyword>
<keyword id="KW-0276">Fatty acid metabolism</keyword>
<keyword id="KW-0444">Lipid biosynthesis</keyword>
<keyword id="KW-0443">Lipid metabolism</keyword>
<keyword id="KW-0511">Multifunctional enzyme</keyword>
<keyword id="KW-0808">Transferase</keyword>
<gene>
    <name evidence="1" type="primary">fabH</name>
    <name type="ordered locus">BCG_0577c</name>
</gene>
<organism>
    <name type="scientific">Mycobacterium bovis (strain BCG / Pasteur 1173P2)</name>
    <dbReference type="NCBI Taxonomy" id="410289"/>
    <lineage>
        <taxon>Bacteria</taxon>
        <taxon>Bacillati</taxon>
        <taxon>Actinomycetota</taxon>
        <taxon>Actinomycetes</taxon>
        <taxon>Mycobacteriales</taxon>
        <taxon>Mycobacteriaceae</taxon>
        <taxon>Mycobacterium</taxon>
        <taxon>Mycobacterium tuberculosis complex</taxon>
    </lineage>
</organism>